<sequence length="94" mass="10624">MTVLTDEQVDAALLDLNDWKHTDGALCRSIKFPTFLAGIDAVCRVAEHAETKDHHPDIDIRYRTVTFILVTHYADGITKKDITMARDIDRLIGD</sequence>
<comment type="catalytic activity">
    <reaction evidence="1">
        <text>(4aS,6R)-4a-hydroxy-L-erythro-5,6,7,8-tetrahydrobiopterin = (6R)-L-erythro-6,7-dihydrobiopterin + H2O</text>
        <dbReference type="Rhea" id="RHEA:11920"/>
        <dbReference type="ChEBI" id="CHEBI:15377"/>
        <dbReference type="ChEBI" id="CHEBI:15642"/>
        <dbReference type="ChEBI" id="CHEBI:43120"/>
        <dbReference type="EC" id="4.2.1.96"/>
    </reaction>
</comment>
<comment type="similarity">
    <text evidence="1">Belongs to the pterin-4-alpha-carbinolamine dehydratase family.</text>
</comment>
<dbReference type="EC" id="4.2.1.96" evidence="1"/>
<dbReference type="EMBL" id="FM211192">
    <property type="protein sequence ID" value="CAR71598.1"/>
    <property type="molecule type" value="Genomic_DNA"/>
</dbReference>
<dbReference type="SMR" id="B8ZRQ6"/>
<dbReference type="KEGG" id="mlb:MLBr01503A"/>
<dbReference type="HOGENOM" id="CLU_081974_4_3_11"/>
<dbReference type="Proteomes" id="UP000006900">
    <property type="component" value="Chromosome"/>
</dbReference>
<dbReference type="GO" id="GO:0008124">
    <property type="term" value="F:4-alpha-hydroxytetrahydrobiopterin dehydratase activity"/>
    <property type="evidence" value="ECO:0007669"/>
    <property type="project" value="UniProtKB-UniRule"/>
</dbReference>
<dbReference type="GO" id="GO:0006729">
    <property type="term" value="P:tetrahydrobiopterin biosynthetic process"/>
    <property type="evidence" value="ECO:0007669"/>
    <property type="project" value="InterPro"/>
</dbReference>
<dbReference type="CDD" id="cd00488">
    <property type="entry name" value="PCD_DCoH"/>
    <property type="match status" value="1"/>
</dbReference>
<dbReference type="Gene3D" id="3.30.1360.20">
    <property type="entry name" value="Transcriptional coactivator/pterin dehydratase"/>
    <property type="match status" value="1"/>
</dbReference>
<dbReference type="HAMAP" id="MF_00434">
    <property type="entry name" value="Pterin_4_alpha"/>
    <property type="match status" value="1"/>
</dbReference>
<dbReference type="InterPro" id="IPR036428">
    <property type="entry name" value="PCD_sf"/>
</dbReference>
<dbReference type="InterPro" id="IPR001533">
    <property type="entry name" value="Pterin_deHydtase"/>
</dbReference>
<dbReference type="NCBIfam" id="NF002017">
    <property type="entry name" value="PRK00823.1-2"/>
    <property type="match status" value="1"/>
</dbReference>
<dbReference type="PANTHER" id="PTHR12599">
    <property type="entry name" value="PTERIN-4-ALPHA-CARBINOLAMINE DEHYDRATASE"/>
    <property type="match status" value="1"/>
</dbReference>
<dbReference type="PANTHER" id="PTHR12599:SF0">
    <property type="entry name" value="PTERIN-4-ALPHA-CARBINOLAMINE DEHYDRATASE"/>
    <property type="match status" value="1"/>
</dbReference>
<dbReference type="Pfam" id="PF01329">
    <property type="entry name" value="Pterin_4a"/>
    <property type="match status" value="1"/>
</dbReference>
<dbReference type="SUPFAM" id="SSF55248">
    <property type="entry name" value="PCD-like"/>
    <property type="match status" value="1"/>
</dbReference>
<proteinExistence type="inferred from homology"/>
<accession>B8ZRQ6</accession>
<protein>
    <recommendedName>
        <fullName evidence="1">Putative pterin-4-alpha-carbinolamine dehydratase</fullName>
        <shortName evidence="1">PHS</shortName>
        <ecNumber evidence="1">4.2.1.96</ecNumber>
    </recommendedName>
    <alternativeName>
        <fullName evidence="1">4-alpha-hydroxy-tetrahydropterin dehydratase</fullName>
    </alternativeName>
    <alternativeName>
        <fullName evidence="1">Pterin carbinolamine dehydratase</fullName>
        <shortName evidence="1">PCD</shortName>
    </alternativeName>
</protein>
<gene>
    <name type="ordered locus">MLBr01503.1</name>
    <name type="ORF">MLBr01503A</name>
</gene>
<feature type="chain" id="PRO_1000192919" description="Putative pterin-4-alpha-carbinolamine dehydratase">
    <location>
        <begin position="1"/>
        <end position="94"/>
    </location>
</feature>
<reference key="1">
    <citation type="journal article" date="2009" name="Nat. Genet.">
        <title>Comparative genomic and phylogeographic analysis of Mycobacterium leprae.</title>
        <authorList>
            <person name="Monot M."/>
            <person name="Honore N."/>
            <person name="Garnier T."/>
            <person name="Zidane N."/>
            <person name="Sherafi D."/>
            <person name="Paniz-Mondolfi A."/>
            <person name="Matsuoka M."/>
            <person name="Taylor G.M."/>
            <person name="Donoghue H.D."/>
            <person name="Bouwman A."/>
            <person name="Mays S."/>
            <person name="Watson C."/>
            <person name="Lockwood D."/>
            <person name="Khamispour A."/>
            <person name="Dowlati Y."/>
            <person name="Jianping S."/>
            <person name="Rea T.H."/>
            <person name="Vera-Cabrera L."/>
            <person name="Stefani M.M."/>
            <person name="Banu S."/>
            <person name="Macdonald M."/>
            <person name="Sapkota B.R."/>
            <person name="Spencer J.S."/>
            <person name="Thomas J."/>
            <person name="Harshman K."/>
            <person name="Singh P."/>
            <person name="Busso P."/>
            <person name="Gattiker A."/>
            <person name="Rougemont J."/>
            <person name="Brennan P.J."/>
            <person name="Cole S.T."/>
        </authorList>
    </citation>
    <scope>NUCLEOTIDE SEQUENCE [LARGE SCALE GENOMIC DNA]</scope>
    <source>
        <strain>Br4923</strain>
    </source>
</reference>
<keyword id="KW-0456">Lyase</keyword>
<evidence type="ECO:0000255" key="1">
    <source>
        <dbReference type="HAMAP-Rule" id="MF_00434"/>
    </source>
</evidence>
<organism>
    <name type="scientific">Mycobacterium leprae (strain Br4923)</name>
    <dbReference type="NCBI Taxonomy" id="561304"/>
    <lineage>
        <taxon>Bacteria</taxon>
        <taxon>Bacillati</taxon>
        <taxon>Actinomycetota</taxon>
        <taxon>Actinomycetes</taxon>
        <taxon>Mycobacteriales</taxon>
        <taxon>Mycobacteriaceae</taxon>
        <taxon>Mycobacterium</taxon>
    </lineage>
</organism>
<name>PHS_MYCLB</name>